<reference key="1">
    <citation type="journal article" date="2001" name="J. Nat. Prod.">
        <title>Cloning, sequencing, and heterologous expression of the elmGHIJ genes involved in the biosynthesis of the polyketide antibiotic elloramycin from Streptomyces olivaceus Tu2353.</title>
        <authorList>
            <person name="Rafanan E.R. Jr."/>
            <person name="Le L."/>
            <person name="Zhao L."/>
            <person name="Decker H."/>
            <person name="Shen B."/>
        </authorList>
    </citation>
    <scope>NUCLEOTIDE SEQUENCE [GENOMIC DNA]</scope>
    <scope>FUNCTION</scope>
    <scope>CATALYTIC ACTIVITY</scope>
    <scope>PATHWAY</scope>
    <source>
        <strain>Tu 2353</strain>
    </source>
</reference>
<reference key="2">
    <citation type="journal article" date="2008" name="Microbiology">
        <title>Biosynthesis of elloramycin in Streptomyces olivaceus requires glycosylation by enzymes encoded outside the aglycon cluster.</title>
        <authorList>
            <person name="Ramos A."/>
            <person name="Lombo F."/>
            <person name="Brana A.F."/>
            <person name="Rohr J."/>
            <person name="Mendez C."/>
            <person name="Salas J.A."/>
        </authorList>
    </citation>
    <scope>NUCLEOTIDE SEQUENCE [GENOMIC DNA]</scope>
    <source>
        <strain>Tu 2353</strain>
    </source>
</reference>
<reference key="3">
    <citation type="journal article" date="2000" name="Org. Lett.">
        <title>Triple hydroxylation of tetracenomycin A2 to tetracenomycin C involving two molecules of O(2) and one molecule of H(2)O.</title>
        <authorList>
            <person name="Rafanan E.R. Jr."/>
            <person name="Hutchinson C.R."/>
            <person name="Shen B."/>
        </authorList>
    </citation>
    <scope>FUNCTION AS A MONOOXYGENASE-DIOXYGENASE</scope>
    <scope>CATALYTIC ACTIVITY</scope>
</reference>
<accession>Q9L4Y1</accession>
<evidence type="ECO:0000250" key="1">
    <source>
        <dbReference type="UniProtKB" id="P39888"/>
    </source>
</evidence>
<evidence type="ECO:0000250" key="2">
    <source>
        <dbReference type="UniProtKB" id="Q54530"/>
    </source>
</evidence>
<evidence type="ECO:0000269" key="3">
    <source>
    </source>
</evidence>
<evidence type="ECO:0000269" key="4">
    <source>
    </source>
</evidence>
<evidence type="ECO:0000303" key="5">
    <source>
    </source>
</evidence>
<evidence type="ECO:0000305" key="6"/>
<evidence type="ECO:0000305" key="7">
    <source>
    </source>
</evidence>
<evidence type="ECO:0000305" key="8">
    <source>
    </source>
</evidence>
<protein>
    <recommendedName>
        <fullName evidence="6">Tetracenomycin B2 monooxygenase-dioxygenase</fullName>
        <ecNumber evidence="3 4">1.14.13.200</ecNumber>
    </recommendedName>
    <alternativeName>
        <fullName evidence="5">Tetracenomycin B2 oxygenase</fullName>
        <shortName evidence="5">Tcm B2 oxygenase</shortName>
    </alternativeName>
</protein>
<organism>
    <name type="scientific">Streptomyces olivaceus</name>
    <dbReference type="NCBI Taxonomy" id="47716"/>
    <lineage>
        <taxon>Bacteria</taxon>
        <taxon>Bacillati</taxon>
        <taxon>Actinomycetota</taxon>
        <taxon>Actinomycetes</taxon>
        <taxon>Kitasatosporales</taxon>
        <taxon>Streptomycetaceae</taxon>
        <taxon>Streptomyces</taxon>
    </lineage>
</organism>
<keyword id="KW-0045">Antibiotic biosynthesis</keyword>
<keyword id="KW-0223">Dioxygenase</keyword>
<keyword id="KW-0274">FAD</keyword>
<keyword id="KW-0285">Flavoprotein</keyword>
<keyword id="KW-0503">Monooxygenase</keyword>
<keyword id="KW-0560">Oxidoreductase</keyword>
<gene>
    <name evidence="5" type="primary">elmG</name>
</gene>
<dbReference type="EC" id="1.14.13.200" evidence="3 4"/>
<dbReference type="EMBL" id="AF263463">
    <property type="protein sequence ID" value="AAF73050.1"/>
    <property type="molecule type" value="Genomic_DNA"/>
</dbReference>
<dbReference type="EMBL" id="AM900040">
    <property type="protein sequence ID" value="CAP12596.1"/>
    <property type="molecule type" value="Genomic_DNA"/>
</dbReference>
<dbReference type="SMR" id="Q9L4Y1"/>
<dbReference type="KEGG" id="ag:CAP12596"/>
<dbReference type="BioCyc" id="MetaCyc:MONOMER-18602"/>
<dbReference type="BRENDA" id="1.14.13.200">
    <property type="organism ID" value="6068"/>
</dbReference>
<dbReference type="GO" id="GO:0051213">
    <property type="term" value="F:dioxygenase activity"/>
    <property type="evidence" value="ECO:0007669"/>
    <property type="project" value="UniProtKB-KW"/>
</dbReference>
<dbReference type="GO" id="GO:0071949">
    <property type="term" value="F:FAD binding"/>
    <property type="evidence" value="ECO:0007669"/>
    <property type="project" value="InterPro"/>
</dbReference>
<dbReference type="GO" id="GO:0016709">
    <property type="term" value="F:oxidoreductase activity, acting on paired donors, with incorporation or reduction of molecular oxygen, NAD(P)H as one donor, and incorporation of one atom of oxygen"/>
    <property type="evidence" value="ECO:0007669"/>
    <property type="project" value="UniProtKB-ARBA"/>
</dbReference>
<dbReference type="GO" id="GO:0017000">
    <property type="term" value="P:antibiotic biosynthetic process"/>
    <property type="evidence" value="ECO:0007669"/>
    <property type="project" value="UniProtKB-KW"/>
</dbReference>
<dbReference type="Gene3D" id="3.40.30.120">
    <property type="match status" value="1"/>
</dbReference>
<dbReference type="Gene3D" id="3.30.9.10">
    <property type="entry name" value="D-Amino Acid Oxidase, subunit A, domain 2"/>
    <property type="match status" value="1"/>
</dbReference>
<dbReference type="Gene3D" id="3.50.50.60">
    <property type="entry name" value="FAD/NAD(P)-binding domain"/>
    <property type="match status" value="1"/>
</dbReference>
<dbReference type="InterPro" id="IPR002938">
    <property type="entry name" value="FAD-bd"/>
</dbReference>
<dbReference type="InterPro" id="IPR036188">
    <property type="entry name" value="FAD/NAD-bd_sf"/>
</dbReference>
<dbReference type="InterPro" id="IPR050641">
    <property type="entry name" value="RIFMO-like"/>
</dbReference>
<dbReference type="PANTHER" id="PTHR43004:SF19">
    <property type="entry name" value="BINDING MONOOXYGENASE, PUTATIVE (JCVI)-RELATED"/>
    <property type="match status" value="1"/>
</dbReference>
<dbReference type="PANTHER" id="PTHR43004">
    <property type="entry name" value="TRK SYSTEM POTASSIUM UPTAKE PROTEIN"/>
    <property type="match status" value="1"/>
</dbReference>
<dbReference type="Pfam" id="PF01494">
    <property type="entry name" value="FAD_binding_3"/>
    <property type="match status" value="1"/>
</dbReference>
<dbReference type="Pfam" id="PF21274">
    <property type="entry name" value="Rng_hyd_C"/>
    <property type="match status" value="1"/>
</dbReference>
<dbReference type="PRINTS" id="PR00420">
    <property type="entry name" value="RNGMNOXGNASE"/>
</dbReference>
<dbReference type="SUPFAM" id="SSF51905">
    <property type="entry name" value="FAD/NAD(P)-binding domain"/>
    <property type="match status" value="1"/>
</dbReference>
<comment type="function">
    <text evidence="3 4 7 8">Involved in the biosynthesis of elloramycin, an antitumor polyketide (PubMed:11325225). In vivo, probably catalyzes the triple hydroxylation of 8-demethyltetracenomycin A2 (tetracenomycin B2) at positions C-4, C-4a and C-12a to give 8-demethyltetracenomycin C (8-DMTC) (Probable). In vitro, catalyzes the triple hydroxylation of tetracenomycin A2 (TCM A2) to give tetracenomycin C (TCM C) (PubMed:11009387, PubMed:11325225). Uses NADPH as an electron donor and requires molecular O(2) (PubMed:11325225).</text>
</comment>
<comment type="catalytic activity">
    <reaction evidence="7 8">
        <text>tetracenomycin B2 + 2 NADPH + 2 O2 + 2 H(+) = 8-demethyltetracenomycin C + 2 NADP(+) + H2O</text>
        <dbReference type="Rhea" id="RHEA:76467"/>
        <dbReference type="ChEBI" id="CHEBI:15377"/>
        <dbReference type="ChEBI" id="CHEBI:15378"/>
        <dbReference type="ChEBI" id="CHEBI:15379"/>
        <dbReference type="ChEBI" id="CHEBI:31144"/>
        <dbReference type="ChEBI" id="CHEBI:32199"/>
        <dbReference type="ChEBI" id="CHEBI:57783"/>
        <dbReference type="ChEBI" id="CHEBI:58349"/>
        <dbReference type="EC" id="1.14.13.200"/>
    </reaction>
    <physiologicalReaction direction="left-to-right" evidence="7 8">
        <dbReference type="Rhea" id="RHEA:76468"/>
    </physiologicalReaction>
</comment>
<comment type="catalytic activity">
    <reaction evidence="3 4">
        <text>tetracenomycin A2 + 2 NADPH + 2 O2 + 2 H(+) = tetracenomycin C + 2 NADP(+) + H2O</text>
        <dbReference type="Rhea" id="RHEA:42820"/>
        <dbReference type="ChEBI" id="CHEBI:9470"/>
        <dbReference type="ChEBI" id="CHEBI:15377"/>
        <dbReference type="ChEBI" id="CHEBI:15378"/>
        <dbReference type="ChEBI" id="CHEBI:15379"/>
        <dbReference type="ChEBI" id="CHEBI:32197"/>
        <dbReference type="ChEBI" id="CHEBI:57783"/>
        <dbReference type="ChEBI" id="CHEBI:58349"/>
        <dbReference type="EC" id="1.14.13.200"/>
    </reaction>
</comment>
<comment type="cofactor">
    <cofactor evidence="1">
        <name>FAD</name>
        <dbReference type="ChEBI" id="CHEBI:57692"/>
    </cofactor>
</comment>
<comment type="pathway">
    <text evidence="4">Antibiotic biosynthesis.</text>
</comment>
<comment type="miscellaneous">
    <text evidence="4">Since tetracenomycin B2, the most likely substrate for ElmG, was not available, tetracenomycin A2 was used as a substrate to test the enzyme activity of the purified ElmG.</text>
</comment>
<comment type="similarity">
    <text evidence="6">Belongs to the PheA/TfdB FAD monooxygenase family.</text>
</comment>
<feature type="chain" id="PRO_0000457805" description="Tetracenomycin B2 monooxygenase-dioxygenase">
    <location>
        <begin position="1"/>
        <end position="539"/>
    </location>
</feature>
<feature type="active site" description="Proton acceptor" evidence="2">
    <location>
        <position position="231"/>
    </location>
</feature>
<feature type="binding site" evidence="2">
    <location>
        <position position="15"/>
    </location>
    <ligand>
        <name>FAD</name>
        <dbReference type="ChEBI" id="CHEBI:57692"/>
    </ligand>
</feature>
<feature type="binding site" evidence="2">
    <location>
        <position position="35"/>
    </location>
    <ligand>
        <name>FAD</name>
        <dbReference type="ChEBI" id="CHEBI:57692"/>
    </ligand>
</feature>
<feature type="binding site" evidence="2">
    <location>
        <position position="128"/>
    </location>
    <ligand>
        <name>FAD</name>
        <dbReference type="ChEBI" id="CHEBI:57692"/>
    </ligand>
</feature>
<feature type="binding site" evidence="2">
    <location>
        <position position="152"/>
    </location>
    <ligand>
        <name>FAD</name>
        <dbReference type="ChEBI" id="CHEBI:57692"/>
    </ligand>
</feature>
<feature type="binding site" evidence="2">
    <location>
        <position position="313"/>
    </location>
    <ligand>
        <name>FAD</name>
        <dbReference type="ChEBI" id="CHEBI:57692"/>
    </ligand>
</feature>
<name>ELMG_STROV</name>
<sequence length="539" mass="58086">MDRIEIPVLVVGGGLTGLAAAVFLRQQGVDCLLVERHRSTTFLTRASGINARTMELLRNAGLEETVIDRSLHLIEGKRWRELGQPADRIPWVVLRARDLADIERAVIVEEPSLDVADVSPTRAQWCGQDKLEPILRDEAVRRGADIRFHTRLDSFAQDADGVDAVIVDRGTGARTAVRSRYLIAADGVRSTVRQALGVTGTGHGSLGKAMSVLFQADFEPVLHGRRFVITYMANPQAPGVLQTFDENRWIFGFFCDAYGGGDAAFDTGRCADIVRTSLGIPDIPLDVQLVQPWEMSHHVADSYRSGRVFLAGDAAHVHPPAGAFGANGGIQDAHNLAWKLASVLHGRASDALLDTYHQERHPVGTEIAEQAWTRHTYRLDGDDELGRRLVDTKVVAAGYRYTSSAVLGAAYPTAIPHELALTGLPGQRVPHVWLDHDGRRVSTVDLAVDGFVLLARADGTPWADAAARLAATTGIPLTAHVVGKTLTDPADALAAATGLGEAGALLLRPDGFVAWRSDTSADDPEAVLDGVLARILART</sequence>
<proteinExistence type="evidence at protein level"/>